<evidence type="ECO:0000250" key="1">
    <source>
        <dbReference type="UniProtKB" id="P15222"/>
    </source>
</evidence>
<evidence type="ECO:0000250" key="2">
    <source>
        <dbReference type="UniProtKB" id="Q9UAD0"/>
    </source>
</evidence>
<evidence type="ECO:0000255" key="3">
    <source>
        <dbReference type="PROSITE-ProRule" id="PRU00545"/>
    </source>
</evidence>
<evidence type="ECO:0000269" key="4">
    <source>
    </source>
</evidence>
<evidence type="ECO:0000303" key="5">
    <source>
    </source>
</evidence>
<evidence type="ECO:0000305" key="6">
    <source>
    </source>
</evidence>
<accession>P60269</accession>
<reference key="1">
    <citation type="journal article" date="1998" name="FEBS Lett.">
        <title>Purification and partial characterization of a 'short' insectotoxin-like peptide from the venom of the scorpion Parabuthus schlechteri.</title>
        <authorList>
            <person name="Tytgat J."/>
            <person name="Debont T."/>
            <person name="Rostoll K."/>
            <person name="Mueller G.J."/>
            <person name="Verdonck F."/>
            <person name="Daenens P."/>
            <person name="van der Walt J.J."/>
            <person name="Possani L.D."/>
        </authorList>
    </citation>
    <scope>PROTEIN SEQUENCE</scope>
    <scope>SUBCELLULAR LOCATION</scope>
    <source>
        <tissue>Venom</tissue>
    </source>
</reference>
<comment type="function">
    <text evidence="2">Toxin with unknown function in healthy organisms. On glioma cells, interacts with chloride channels (probably ClC-3/CLCN3) and MMP2 at the surface of glioma cells. This complex is then internalized via caveolae, thus inhibiting the chloride channels necessary for cell shrinkage and tumor propagation (By similarity).</text>
</comment>
<comment type="subcellular location">
    <subcellularLocation>
        <location evidence="4">Secreted</location>
    </subcellularLocation>
</comment>
<comment type="tissue specificity">
    <text evidence="6">Expressed by the venom gland.</text>
</comment>
<comment type="domain">
    <text evidence="1">The presence of a 'disulfide through disulfide knot' structurally defines this protein as a knottin.</text>
</comment>
<comment type="miscellaneous">
    <text>The protein sequence was deduced by comparison to other short insectotoxin sequences.</text>
</comment>
<comment type="similarity">
    <text evidence="3">Belongs to the short scorpion toxin superfamily. Chloride channel inhibitor family.</text>
</comment>
<protein>
    <recommendedName>
        <fullName evidence="5">Insectotoxin-I4</fullName>
    </recommendedName>
    <alternativeName>
        <fullName>BeI4</fullName>
    </alternativeName>
</protein>
<proteinExistence type="evidence at protein level"/>
<feature type="peptide" id="PRO_0000044937" description="Insectotoxin-I4" evidence="4">
    <location>
        <begin position="1"/>
        <end position="35"/>
    </location>
</feature>
<feature type="disulfide bond" evidence="1 3">
    <location>
        <begin position="2"/>
        <end position="19"/>
    </location>
</feature>
<feature type="disulfide bond" evidence="1 3">
    <location>
        <begin position="5"/>
        <end position="26"/>
    </location>
</feature>
<feature type="disulfide bond" evidence="1 3">
    <location>
        <begin position="16"/>
        <end position="31"/>
    </location>
</feature>
<feature type="disulfide bond" evidence="1 3">
    <location>
        <begin position="20"/>
        <end position="33"/>
    </location>
</feature>
<sequence length="35" mass="3875">MCMPCFTTDHNMAKKCRDCCGGNGKCFGPQCLCNR</sequence>
<name>CTXI4_MESEU</name>
<dbReference type="SMR" id="P60269"/>
<dbReference type="GO" id="GO:0005576">
    <property type="term" value="C:extracellular region"/>
    <property type="evidence" value="ECO:0007669"/>
    <property type="project" value="UniProtKB-SubCell"/>
</dbReference>
<dbReference type="GO" id="GO:0017081">
    <property type="term" value="F:chloride channel regulator activity"/>
    <property type="evidence" value="ECO:0007669"/>
    <property type="project" value="UniProtKB-KW"/>
</dbReference>
<dbReference type="GO" id="GO:0090729">
    <property type="term" value="F:toxin activity"/>
    <property type="evidence" value="ECO:0007669"/>
    <property type="project" value="UniProtKB-KW"/>
</dbReference>
<dbReference type="InterPro" id="IPR036574">
    <property type="entry name" value="Scorpion_toxin-like_sf"/>
</dbReference>
<dbReference type="InterPro" id="IPR007958">
    <property type="entry name" value="Scorpion_toxinS_Cl_inh"/>
</dbReference>
<dbReference type="Pfam" id="PF05294">
    <property type="entry name" value="Toxin_5"/>
    <property type="match status" value="1"/>
</dbReference>
<dbReference type="SUPFAM" id="SSF57095">
    <property type="entry name" value="Scorpion toxin-like"/>
    <property type="match status" value="1"/>
</dbReference>
<dbReference type="PROSITE" id="PS51200">
    <property type="entry name" value="SHORT_SCORPION_CHLORIDE"/>
    <property type="match status" value="1"/>
</dbReference>
<organism>
    <name type="scientific">Mesobuthus eupeus</name>
    <name type="common">Lesser Asian scorpion</name>
    <name type="synonym">Buthus eupeus</name>
    <dbReference type="NCBI Taxonomy" id="34648"/>
    <lineage>
        <taxon>Eukaryota</taxon>
        <taxon>Metazoa</taxon>
        <taxon>Ecdysozoa</taxon>
        <taxon>Arthropoda</taxon>
        <taxon>Chelicerata</taxon>
        <taxon>Arachnida</taxon>
        <taxon>Scorpiones</taxon>
        <taxon>Buthida</taxon>
        <taxon>Buthoidea</taxon>
        <taxon>Buthidae</taxon>
        <taxon>Mesobuthus</taxon>
    </lineage>
</organism>
<keyword id="KW-1265">Chloride channel impairing toxin</keyword>
<keyword id="KW-0903">Direct protein sequencing</keyword>
<keyword id="KW-1015">Disulfide bond</keyword>
<keyword id="KW-0872">Ion channel impairing toxin</keyword>
<keyword id="KW-0960">Knottin</keyword>
<keyword id="KW-0964">Secreted</keyword>
<keyword id="KW-0800">Toxin</keyword>
<keyword id="KW-0870">Voltage-gated chloride channel impairing toxin</keyword>